<name>S10AA_CHICK</name>
<dbReference type="EMBL" id="M38592">
    <property type="protein sequence ID" value="AAA48690.1"/>
    <property type="molecule type" value="mRNA"/>
</dbReference>
<dbReference type="PIR" id="JH0663">
    <property type="entry name" value="JH0663"/>
</dbReference>
<dbReference type="RefSeq" id="NP_990837.1">
    <property type="nucleotide sequence ID" value="NM_205506.3"/>
</dbReference>
<dbReference type="RefSeq" id="XP_015135488.1">
    <property type="nucleotide sequence ID" value="XM_015280002.1"/>
</dbReference>
<dbReference type="RefSeq" id="XP_024999163.1">
    <property type="nucleotide sequence ID" value="XM_025143395.3"/>
</dbReference>
<dbReference type="RefSeq" id="XP_046788523.1">
    <property type="nucleotide sequence ID" value="XM_046932567.1"/>
</dbReference>
<dbReference type="RefSeq" id="XP_046788524.1">
    <property type="nucleotide sequence ID" value="XM_046932568.1"/>
</dbReference>
<dbReference type="SMR" id="P27003"/>
<dbReference type="FunCoup" id="P27003">
    <property type="interactions" value="1451"/>
</dbReference>
<dbReference type="STRING" id="9031.ENSGALP00000041652"/>
<dbReference type="PaxDb" id="9031-ENSGALP00000041652"/>
<dbReference type="Ensembl" id="ENSGALT00010067907.1">
    <property type="protein sequence ID" value="ENSGALP00010041650.1"/>
    <property type="gene ID" value="ENSGALG00010028017.1"/>
</dbReference>
<dbReference type="Ensembl" id="ENSGALT00010067967.1">
    <property type="protein sequence ID" value="ENSGALP00010041710.1"/>
    <property type="gene ID" value="ENSGALG00010028048.1"/>
</dbReference>
<dbReference type="GeneID" id="396506"/>
<dbReference type="KEGG" id="gga:396506"/>
<dbReference type="CTD" id="6281"/>
<dbReference type="VEuPathDB" id="HostDB:geneid_396506"/>
<dbReference type="VEuPathDB" id="HostDB:LOC121107546"/>
<dbReference type="eggNOG" id="ENOG502S6TB">
    <property type="taxonomic scope" value="Eukaryota"/>
</dbReference>
<dbReference type="GeneTree" id="ENSGT00940000154197"/>
<dbReference type="HOGENOM" id="CLU_214116_0_0_1"/>
<dbReference type="InParanoid" id="P27003"/>
<dbReference type="OMA" id="SEMEHAP"/>
<dbReference type="OrthoDB" id="26525at2759"/>
<dbReference type="PhylomeDB" id="P27003"/>
<dbReference type="Reactome" id="R-GGA-5668599">
    <property type="pathway name" value="RHO GTPases Activate NADPH Oxidases"/>
</dbReference>
<dbReference type="Reactome" id="R-GGA-5686938">
    <property type="pathway name" value="Regulation of TLR by endogenous ligand"/>
</dbReference>
<dbReference type="Reactome" id="R-GGA-6798695">
    <property type="pathway name" value="Neutrophil degranulation"/>
</dbReference>
<dbReference type="Reactome" id="R-GGA-6799990">
    <property type="pathway name" value="Metal sequestration by antimicrobial proteins"/>
</dbReference>
<dbReference type="Reactome" id="R-GGA-75205">
    <property type="pathway name" value="Dissolution of Fibrin Clot"/>
</dbReference>
<dbReference type="PRO" id="PR:P27003"/>
<dbReference type="Proteomes" id="UP000000539">
    <property type="component" value="Chromosome 25"/>
</dbReference>
<dbReference type="Bgee" id="ENSGALG00000028774">
    <property type="expression patterns" value="Expressed in granulocyte and 13 other cell types or tissues"/>
</dbReference>
<dbReference type="GO" id="GO:0005737">
    <property type="term" value="C:cytoplasm"/>
    <property type="evidence" value="ECO:0000318"/>
    <property type="project" value="GO_Central"/>
</dbReference>
<dbReference type="GO" id="GO:0005509">
    <property type="term" value="F:calcium ion binding"/>
    <property type="evidence" value="ECO:0000318"/>
    <property type="project" value="GO_Central"/>
</dbReference>
<dbReference type="GO" id="GO:0048306">
    <property type="term" value="F:calcium-dependent protein binding"/>
    <property type="evidence" value="ECO:0000318"/>
    <property type="project" value="GO_Central"/>
</dbReference>
<dbReference type="CDD" id="cd05024">
    <property type="entry name" value="S-100A10"/>
    <property type="match status" value="1"/>
</dbReference>
<dbReference type="Gene3D" id="1.10.238.10">
    <property type="entry name" value="EF-hand"/>
    <property type="match status" value="1"/>
</dbReference>
<dbReference type="InterPro" id="IPR011992">
    <property type="entry name" value="EF-hand-dom_pair"/>
</dbReference>
<dbReference type="InterPro" id="IPR002048">
    <property type="entry name" value="EF_hand_dom"/>
</dbReference>
<dbReference type="InterPro" id="IPR028476">
    <property type="entry name" value="S100-A10"/>
</dbReference>
<dbReference type="InterPro" id="IPR001751">
    <property type="entry name" value="S100/CaBP7/8-like_CS"/>
</dbReference>
<dbReference type="InterPro" id="IPR013787">
    <property type="entry name" value="S100_Ca-bd_sub"/>
</dbReference>
<dbReference type="PANTHER" id="PTHR11639:SF74">
    <property type="entry name" value="PROTEIN S100-A10"/>
    <property type="match status" value="1"/>
</dbReference>
<dbReference type="PANTHER" id="PTHR11639">
    <property type="entry name" value="S100 CALCIUM-BINDING PROTEIN"/>
    <property type="match status" value="1"/>
</dbReference>
<dbReference type="Pfam" id="PF01023">
    <property type="entry name" value="S_100"/>
    <property type="match status" value="1"/>
</dbReference>
<dbReference type="SMART" id="SM01394">
    <property type="entry name" value="S_100"/>
    <property type="match status" value="1"/>
</dbReference>
<dbReference type="SUPFAM" id="SSF47473">
    <property type="entry name" value="EF-hand"/>
    <property type="match status" value="1"/>
</dbReference>
<dbReference type="PROSITE" id="PS50222">
    <property type="entry name" value="EF_HAND_2"/>
    <property type="match status" value="1"/>
</dbReference>
<dbReference type="PROSITE" id="PS00303">
    <property type="entry name" value="S100_CABP"/>
    <property type="match status" value="1"/>
</dbReference>
<protein>
    <recommendedName>
        <fullName>Protein S100-A10</fullName>
    </recommendedName>
    <alternativeName>
        <fullName>Calpactin I light chain</fullName>
    </alternativeName>
    <alternativeName>
        <fullName>Calpactin-1 light chain</fullName>
    </alternativeName>
    <alternativeName>
        <fullName>Cellular ligand of annexin II</fullName>
    </alternativeName>
    <alternativeName>
        <fullName>S100 calcium-binding protein A10</fullName>
    </alternativeName>
    <alternativeName>
        <fullName>p10 protein</fullName>
    </alternativeName>
    <alternativeName>
        <fullName>p11</fullName>
    </alternativeName>
</protein>
<organism>
    <name type="scientific">Gallus gallus</name>
    <name type="common">Chicken</name>
    <dbReference type="NCBI Taxonomy" id="9031"/>
    <lineage>
        <taxon>Eukaryota</taxon>
        <taxon>Metazoa</taxon>
        <taxon>Chordata</taxon>
        <taxon>Craniata</taxon>
        <taxon>Vertebrata</taxon>
        <taxon>Euteleostomi</taxon>
        <taxon>Archelosauria</taxon>
        <taxon>Archosauria</taxon>
        <taxon>Dinosauria</taxon>
        <taxon>Saurischia</taxon>
        <taxon>Theropoda</taxon>
        <taxon>Coelurosauria</taxon>
        <taxon>Aves</taxon>
        <taxon>Neognathae</taxon>
        <taxon>Galloanserae</taxon>
        <taxon>Galliformes</taxon>
        <taxon>Phasianidae</taxon>
        <taxon>Phasianinae</taxon>
        <taxon>Gallus</taxon>
    </lineage>
</organism>
<feature type="initiator methionine" description="Removed" evidence="1">
    <location>
        <position position="1"/>
    </location>
</feature>
<feature type="chain" id="PRO_0000144007" description="Protein S100-A10">
    <location>
        <begin position="2"/>
        <end position="97"/>
    </location>
</feature>
<feature type="domain" description="EF-hand" evidence="2">
    <location>
        <begin position="47"/>
        <end position="82"/>
    </location>
</feature>
<feature type="region of interest" description="Ancestral calcium site">
    <location>
        <begin position="60"/>
        <end position="71"/>
    </location>
</feature>
<evidence type="ECO:0000250" key="1"/>
<evidence type="ECO:0000255" key="2">
    <source>
        <dbReference type="PROSITE-ProRule" id="PRU00448"/>
    </source>
</evidence>
<evidence type="ECO:0000305" key="3"/>
<keyword id="KW-1185">Reference proteome</keyword>
<keyword id="KW-0677">Repeat</keyword>
<sequence>MPSQMEHAMETLMFTFHKYAGDKNYLSKEDLRALMEKEFPGFLENQRDPMALDKIMKDLDQCRDGKVGFQSFFSLVAGLTIACNDYFVVHMKQKGRK</sequence>
<accession>P27003</accession>
<proteinExistence type="inferred from homology"/>
<comment type="function">
    <text evidence="1">Because S100A10 induces the dimerization of ANXA2/p36, it may function as a regulator of protein phosphorylation in that the ANXA2 monomer is the preferred target (in vitro) of tyrosine-specific kinase.</text>
</comment>
<comment type="subunit">
    <text>Heterotetramer containing 2 light chains of S100A10/p11 and 2 heavy chains of ANXA2/p36.</text>
</comment>
<comment type="miscellaneous">
    <text>Does not appear to bind calcium. Contains 2 ancestral calcium site related to EF-hand domains that have lost their ability to bind calcium.</text>
</comment>
<comment type="similarity">
    <text evidence="3">Belongs to the S-100 family.</text>
</comment>
<reference key="1">
    <citation type="journal article" date="1991" name="Gene">
        <title>Primary structure of human, chicken, and Xenopus laevis p11, a cellular ligand of the Src-kinase substrate, annexin II.</title>
        <authorList>
            <person name="Kube E."/>
            <person name="Weber K."/>
            <person name="Gerke V."/>
        </authorList>
    </citation>
    <scope>NUCLEOTIDE SEQUENCE [MRNA]</scope>
</reference>
<gene>
    <name type="primary">S100A10</name>
</gene>